<evidence type="ECO:0000250" key="1"/>
<evidence type="ECO:0000305" key="2"/>
<sequence>MAQLAGQPVVILPEGTQRYVGRDAQRLNILAARIIAETVRTTLGPKGMDKMLVDSLGDIVITNDGATILDEMDIQHPAAKMMVEVAKTQDKEAGDGTTTAVVIAGELLRKAEELLDQNIHPSIIIKGYALAAEKAQEILDSIARDVDVEDREILKKAAMTAITGKAAEEEREYLAEIAVEAVKQVAEKVGDRYHVDLDNIKFEKKEGGSVKDTQLIKGVVIDKEVVHPGMRKRVEGAKIALINEALEVKETETDAEIRITSPEQLQAFLEQEEKMLREMVDKIKEVGANVVFVQKGIDDLAQHYLAKYGIMAVRRVKKSDMEKLAKATGAKIVTNVRDLTPEDLGEAELVEQRKVAGENMIFVEGCKNPKAVTILIRGGTEHVVDEVERALEDAVKVVKDIVEDGKIVAAGGAPEIELAISVDEYAKEVGGKEQLAIEAFAEALKVIPRTLAGNAGLDPIETLVKVIAAHKEKGPTIGVDVFEGEPADMLERGVIAPVRVPKQAIKSAKAAIMILRIDDVIAASKLEKDKEGGKGGTRDFGSDLD</sequence>
<accession>O24732</accession>
<keyword id="KW-0067">ATP-binding</keyword>
<keyword id="KW-0143">Chaperone</keyword>
<keyword id="KW-0547">Nucleotide-binding</keyword>
<name>THSB_THEK8</name>
<dbReference type="EMBL" id="AB001083">
    <property type="protein sequence ID" value="BAA22210.1"/>
    <property type="molecule type" value="Genomic_DNA"/>
</dbReference>
<dbReference type="SMR" id="O24732"/>
<dbReference type="GO" id="GO:0005524">
    <property type="term" value="F:ATP binding"/>
    <property type="evidence" value="ECO:0007669"/>
    <property type="project" value="UniProtKB-KW"/>
</dbReference>
<dbReference type="GO" id="GO:0016887">
    <property type="term" value="F:ATP hydrolysis activity"/>
    <property type="evidence" value="ECO:0007669"/>
    <property type="project" value="InterPro"/>
</dbReference>
<dbReference type="GO" id="GO:0140662">
    <property type="term" value="F:ATP-dependent protein folding chaperone"/>
    <property type="evidence" value="ECO:0007669"/>
    <property type="project" value="InterPro"/>
</dbReference>
<dbReference type="GO" id="GO:0051082">
    <property type="term" value="F:unfolded protein binding"/>
    <property type="evidence" value="ECO:0007669"/>
    <property type="project" value="InterPro"/>
</dbReference>
<dbReference type="CDD" id="cd03343">
    <property type="entry name" value="cpn60"/>
    <property type="match status" value="1"/>
</dbReference>
<dbReference type="Gene3D" id="3.50.7.10">
    <property type="entry name" value="GroEL"/>
    <property type="match status" value="1"/>
</dbReference>
<dbReference type="Gene3D" id="1.10.560.10">
    <property type="entry name" value="GroEL-like equatorial domain"/>
    <property type="match status" value="1"/>
</dbReference>
<dbReference type="Gene3D" id="3.30.260.10">
    <property type="entry name" value="TCP-1-like chaperonin intermediate domain"/>
    <property type="match status" value="1"/>
</dbReference>
<dbReference type="InterPro" id="IPR017998">
    <property type="entry name" value="Chaperone_TCP-1"/>
</dbReference>
<dbReference type="InterPro" id="IPR002194">
    <property type="entry name" value="Chaperonin_TCP-1_CS"/>
</dbReference>
<dbReference type="InterPro" id="IPR002423">
    <property type="entry name" value="Cpn60/GroEL/TCP-1"/>
</dbReference>
<dbReference type="InterPro" id="IPR027409">
    <property type="entry name" value="GroEL-like_apical_dom_sf"/>
</dbReference>
<dbReference type="InterPro" id="IPR027413">
    <property type="entry name" value="GROEL-like_equatorial_sf"/>
</dbReference>
<dbReference type="InterPro" id="IPR027410">
    <property type="entry name" value="TCP-1-like_intermed_sf"/>
</dbReference>
<dbReference type="InterPro" id="IPR053374">
    <property type="entry name" value="TCP-1_chaperonin"/>
</dbReference>
<dbReference type="InterPro" id="IPR054827">
    <property type="entry name" value="thermosome_alpha"/>
</dbReference>
<dbReference type="InterPro" id="IPR012714">
    <property type="entry name" value="Thermosome_arc"/>
</dbReference>
<dbReference type="NCBIfam" id="NF041082">
    <property type="entry name" value="thermosome_alpha"/>
    <property type="match status" value="1"/>
</dbReference>
<dbReference type="NCBIfam" id="TIGR02339">
    <property type="entry name" value="thermosome_arch"/>
    <property type="match status" value="1"/>
</dbReference>
<dbReference type="NCBIfam" id="NF041083">
    <property type="entry name" value="thermosome_beta"/>
    <property type="match status" value="1"/>
</dbReference>
<dbReference type="PANTHER" id="PTHR11353">
    <property type="entry name" value="CHAPERONIN"/>
    <property type="match status" value="1"/>
</dbReference>
<dbReference type="Pfam" id="PF00118">
    <property type="entry name" value="Cpn60_TCP1"/>
    <property type="match status" value="1"/>
</dbReference>
<dbReference type="PRINTS" id="PR00304">
    <property type="entry name" value="TCOMPLEXTCP1"/>
</dbReference>
<dbReference type="SUPFAM" id="SSF52029">
    <property type="entry name" value="GroEL apical domain-like"/>
    <property type="match status" value="1"/>
</dbReference>
<dbReference type="SUPFAM" id="SSF48592">
    <property type="entry name" value="GroEL equatorial domain-like"/>
    <property type="match status" value="1"/>
</dbReference>
<dbReference type="SUPFAM" id="SSF54849">
    <property type="entry name" value="GroEL-intermediate domain like"/>
    <property type="match status" value="1"/>
</dbReference>
<dbReference type="PROSITE" id="PS00750">
    <property type="entry name" value="TCP1_1"/>
    <property type="match status" value="1"/>
</dbReference>
<dbReference type="PROSITE" id="PS00751">
    <property type="entry name" value="TCP1_2"/>
    <property type="match status" value="1"/>
</dbReference>
<dbReference type="PROSITE" id="PS00995">
    <property type="entry name" value="TCP1_3"/>
    <property type="match status" value="1"/>
</dbReference>
<proteinExistence type="inferred from homology"/>
<reference key="1">
    <citation type="submission" date="1997-09" db="EMBL/GenBank/DDBJ databases">
        <authorList>
            <person name="Yoshida T."/>
            <person name="Yohda M."/>
            <person name="Ohta T."/>
            <person name="Iida T."/>
            <person name="Maruyama T."/>
            <person name="Kagawa Y."/>
        </authorList>
    </citation>
    <scope>NUCLEOTIDE SEQUENCE [GENOMIC DNA]</scope>
</reference>
<protein>
    <recommendedName>
        <fullName>Thermosome subunit beta</fullName>
    </recommendedName>
    <alternativeName>
        <fullName>Chaperonin subunit beta</fullName>
    </alternativeName>
    <alternativeName>
        <fullName>Thermosome subunit 2</fullName>
    </alternativeName>
</protein>
<gene>
    <name type="primary">thsB</name>
</gene>
<feature type="chain" id="PRO_0000128414" description="Thermosome subunit beta">
    <location>
        <begin position="1"/>
        <end position="545"/>
    </location>
</feature>
<organism>
    <name type="scientific">Thermococcus sp. (strain KS-8)</name>
    <dbReference type="NCBI Taxonomy" id="79680"/>
    <lineage>
        <taxon>Archaea</taxon>
        <taxon>Methanobacteriati</taxon>
        <taxon>Methanobacteriota</taxon>
        <taxon>Thermococci</taxon>
        <taxon>Thermococcales</taxon>
        <taxon>Thermococcaceae</taxon>
        <taxon>Thermococcus</taxon>
    </lineage>
</organism>
<comment type="function">
    <text evidence="1">Molecular chaperone; binds unfolded polypeptides in vitro, and has a weak ATPase activity.</text>
</comment>
<comment type="subunit">
    <text evidence="1">Forms a Heterooligomeric complex of two stacked eight-membered rings.</text>
</comment>
<comment type="similarity">
    <text evidence="2">Belongs to the TCP-1 chaperonin family.</text>
</comment>